<organism>
    <name type="scientific">Akkermansia muciniphila (strain ATCC BAA-835 / DSM 22959 / JCM 33894 / BCRC 81048 / CCUG 64013 / CIP 107961 / Muc)</name>
    <dbReference type="NCBI Taxonomy" id="349741"/>
    <lineage>
        <taxon>Bacteria</taxon>
        <taxon>Pseudomonadati</taxon>
        <taxon>Verrucomicrobiota</taxon>
        <taxon>Verrucomicrobiia</taxon>
        <taxon>Verrucomicrobiales</taxon>
        <taxon>Akkermansiaceae</taxon>
        <taxon>Akkermansia</taxon>
    </lineage>
</organism>
<name>RS10_AKKM8</name>
<proteinExistence type="inferred from homology"/>
<comment type="function">
    <text evidence="1">Involved in the binding of tRNA to the ribosomes.</text>
</comment>
<comment type="subunit">
    <text evidence="1">Part of the 30S ribosomal subunit.</text>
</comment>
<comment type="similarity">
    <text evidence="1">Belongs to the universal ribosomal protein uS10 family.</text>
</comment>
<protein>
    <recommendedName>
        <fullName evidence="1">Small ribosomal subunit protein uS10</fullName>
    </recommendedName>
    <alternativeName>
        <fullName evidence="2">30S ribosomal protein S10</fullName>
    </alternativeName>
</protein>
<keyword id="KW-1185">Reference proteome</keyword>
<keyword id="KW-0687">Ribonucleoprotein</keyword>
<keyword id="KW-0689">Ribosomal protein</keyword>
<sequence length="102" mass="11711">MQSPKIRIRLRAFDYRAIDRSSQEIVETAKRTGAKVHGPIPLPTRIEKFSVNRSVHVNKKSAEQFEIRTHKRLLDIVDPTARTIDELKKLNLPAGVDITIRI</sequence>
<feature type="chain" id="PRO_1000196278" description="Small ribosomal subunit protein uS10">
    <location>
        <begin position="1"/>
        <end position="102"/>
    </location>
</feature>
<accession>B2UMU1</accession>
<dbReference type="EMBL" id="CP001071">
    <property type="protein sequence ID" value="ACD04147.1"/>
    <property type="molecule type" value="Genomic_DNA"/>
</dbReference>
<dbReference type="RefSeq" id="WP_012419362.1">
    <property type="nucleotide sequence ID" value="NZ_CP071807.1"/>
</dbReference>
<dbReference type="SMR" id="B2UMU1"/>
<dbReference type="STRING" id="349741.Amuc_0305"/>
<dbReference type="PaxDb" id="349741-Amuc_0305"/>
<dbReference type="GeneID" id="60879783"/>
<dbReference type="KEGG" id="amu:Amuc_0305"/>
<dbReference type="eggNOG" id="COG0051">
    <property type="taxonomic scope" value="Bacteria"/>
</dbReference>
<dbReference type="HOGENOM" id="CLU_122625_1_3_0"/>
<dbReference type="OrthoDB" id="9804464at2"/>
<dbReference type="BioCyc" id="AMUC349741:G1GBX-347-MONOMER"/>
<dbReference type="Proteomes" id="UP000001031">
    <property type="component" value="Chromosome"/>
</dbReference>
<dbReference type="GO" id="GO:1990904">
    <property type="term" value="C:ribonucleoprotein complex"/>
    <property type="evidence" value="ECO:0007669"/>
    <property type="project" value="UniProtKB-KW"/>
</dbReference>
<dbReference type="GO" id="GO:0005840">
    <property type="term" value="C:ribosome"/>
    <property type="evidence" value="ECO:0007669"/>
    <property type="project" value="UniProtKB-KW"/>
</dbReference>
<dbReference type="GO" id="GO:0003735">
    <property type="term" value="F:structural constituent of ribosome"/>
    <property type="evidence" value="ECO:0007669"/>
    <property type="project" value="InterPro"/>
</dbReference>
<dbReference type="GO" id="GO:0000049">
    <property type="term" value="F:tRNA binding"/>
    <property type="evidence" value="ECO:0007669"/>
    <property type="project" value="UniProtKB-UniRule"/>
</dbReference>
<dbReference type="GO" id="GO:0006412">
    <property type="term" value="P:translation"/>
    <property type="evidence" value="ECO:0007669"/>
    <property type="project" value="UniProtKB-UniRule"/>
</dbReference>
<dbReference type="FunFam" id="3.30.70.600:FF:000003">
    <property type="entry name" value="30S ribosomal protein S10"/>
    <property type="match status" value="1"/>
</dbReference>
<dbReference type="Gene3D" id="3.30.70.600">
    <property type="entry name" value="Ribosomal protein S10 domain"/>
    <property type="match status" value="1"/>
</dbReference>
<dbReference type="HAMAP" id="MF_00508">
    <property type="entry name" value="Ribosomal_uS10"/>
    <property type="match status" value="1"/>
</dbReference>
<dbReference type="InterPro" id="IPR001848">
    <property type="entry name" value="Ribosomal_uS10"/>
</dbReference>
<dbReference type="InterPro" id="IPR018268">
    <property type="entry name" value="Ribosomal_uS10_CS"/>
</dbReference>
<dbReference type="InterPro" id="IPR027486">
    <property type="entry name" value="Ribosomal_uS10_dom"/>
</dbReference>
<dbReference type="InterPro" id="IPR036838">
    <property type="entry name" value="Ribosomal_uS10_dom_sf"/>
</dbReference>
<dbReference type="NCBIfam" id="NF001861">
    <property type="entry name" value="PRK00596.1"/>
    <property type="match status" value="1"/>
</dbReference>
<dbReference type="NCBIfam" id="TIGR01049">
    <property type="entry name" value="rpsJ_bact"/>
    <property type="match status" value="1"/>
</dbReference>
<dbReference type="PANTHER" id="PTHR11700">
    <property type="entry name" value="30S RIBOSOMAL PROTEIN S10 FAMILY MEMBER"/>
    <property type="match status" value="1"/>
</dbReference>
<dbReference type="Pfam" id="PF00338">
    <property type="entry name" value="Ribosomal_S10"/>
    <property type="match status" value="1"/>
</dbReference>
<dbReference type="PRINTS" id="PR00971">
    <property type="entry name" value="RIBOSOMALS10"/>
</dbReference>
<dbReference type="SMART" id="SM01403">
    <property type="entry name" value="Ribosomal_S10"/>
    <property type="match status" value="1"/>
</dbReference>
<dbReference type="SUPFAM" id="SSF54999">
    <property type="entry name" value="Ribosomal protein S10"/>
    <property type="match status" value="1"/>
</dbReference>
<dbReference type="PROSITE" id="PS00361">
    <property type="entry name" value="RIBOSOMAL_S10"/>
    <property type="match status" value="1"/>
</dbReference>
<gene>
    <name evidence="1" type="primary">rpsJ</name>
    <name type="ordered locus">Amuc_0305</name>
</gene>
<evidence type="ECO:0000255" key="1">
    <source>
        <dbReference type="HAMAP-Rule" id="MF_00508"/>
    </source>
</evidence>
<evidence type="ECO:0000305" key="2"/>
<reference key="1">
    <citation type="journal article" date="2011" name="PLoS ONE">
        <title>The genome of Akkermansia muciniphila, a dedicated intestinal mucin degrader, and its use in exploring intestinal metagenomes.</title>
        <authorList>
            <person name="van Passel M.W."/>
            <person name="Kant R."/>
            <person name="Zoetendal E.G."/>
            <person name="Plugge C.M."/>
            <person name="Derrien M."/>
            <person name="Malfatti S.A."/>
            <person name="Chain P.S."/>
            <person name="Woyke T."/>
            <person name="Palva A."/>
            <person name="de Vos W.M."/>
            <person name="Smidt H."/>
        </authorList>
    </citation>
    <scope>NUCLEOTIDE SEQUENCE [LARGE SCALE GENOMIC DNA]</scope>
    <source>
        <strain>ATCC BAA-835 / DSM 22959 / JCM 33894 / BCRC 81048 / CCUG 64013 / CIP 107961 / Muc</strain>
    </source>
</reference>